<gene>
    <name evidence="1" type="primary">lepA</name>
    <name type="ordered locus">Jann_3431</name>
</gene>
<keyword id="KW-0997">Cell inner membrane</keyword>
<keyword id="KW-1003">Cell membrane</keyword>
<keyword id="KW-0342">GTP-binding</keyword>
<keyword id="KW-0378">Hydrolase</keyword>
<keyword id="KW-0472">Membrane</keyword>
<keyword id="KW-0547">Nucleotide-binding</keyword>
<keyword id="KW-0648">Protein biosynthesis</keyword>
<keyword id="KW-1185">Reference proteome</keyword>
<evidence type="ECO:0000255" key="1">
    <source>
        <dbReference type="HAMAP-Rule" id="MF_00071"/>
    </source>
</evidence>
<accession>Q28LR4</accession>
<sequence>MTDLNRIRNFSIVAHIDHGKSTLADRLIQLTGTVAARDMQAQLLDQMDIERERGITIKANTVRIEYPAKDGHTYILNLIDTPGHVDFAYEVSRSMQAVEGSLLVVDASQGVEAQTLANVYQAIDADHEIVPVLNKVDLPAAEPDRVREQIEDVIGIDASEAVEISAKTGIGIPDVLEAIVTRLPAPKGDRDAPLKAMLVDSYYDSYLGVVVLIRVIDGVIKKGDKIKMMRTGGQYPVDRLGVFTPKMKDIGELGPGEMGFLTASIKQVRDTRVGDTITHDKHGAEQPLAGFKPSQPVVFCGLFPVDTNQFEDLRDAIEKLALNDASFSHEMETSAALGFGFRCGFLGLLHLEVIRDRLEREYDIDLITTAPSVIYHVHMRDETMVDLHNPADMPDPAAIDRIEEPRIKATILVPDDYLGDVLKLCQDRRGIQIDLTYAGTRAMVVYDLPLNEVVFDFYDRLKSVTKGYASFDYQMIGYREDALVKMQVLVNDEPVDALSIMVHRDRAETRGRAMVEKLKDLIPRHMFKIPIQAAIGGRVIARETLSAMRKDVTAKCYGGDASRKRKLLDKQKAGKKKMRQFGKVEIPQSAFISALKMDG</sequence>
<name>LEPA_JANSC</name>
<proteinExistence type="inferred from homology"/>
<reference key="1">
    <citation type="submission" date="2006-02" db="EMBL/GenBank/DDBJ databases">
        <title>Complete sequence of chromosome of Jannaschia sp. CCS1.</title>
        <authorList>
            <consortium name="US DOE Joint Genome Institute"/>
            <person name="Copeland A."/>
            <person name="Lucas S."/>
            <person name="Lapidus A."/>
            <person name="Barry K."/>
            <person name="Detter J.C."/>
            <person name="Glavina del Rio T."/>
            <person name="Hammon N."/>
            <person name="Israni S."/>
            <person name="Pitluck S."/>
            <person name="Brettin T."/>
            <person name="Bruce D."/>
            <person name="Han C."/>
            <person name="Tapia R."/>
            <person name="Gilna P."/>
            <person name="Chertkov O."/>
            <person name="Saunders E."/>
            <person name="Schmutz J."/>
            <person name="Larimer F."/>
            <person name="Land M."/>
            <person name="Kyrpides N."/>
            <person name="Lykidis A."/>
            <person name="Moran M.A."/>
            <person name="Belas R."/>
            <person name="Ye W."/>
            <person name="Buchan A."/>
            <person name="Gonzalez J.M."/>
            <person name="Schell M.A."/>
            <person name="Richardson P."/>
        </authorList>
    </citation>
    <scope>NUCLEOTIDE SEQUENCE [LARGE SCALE GENOMIC DNA]</scope>
    <source>
        <strain>CCS1</strain>
    </source>
</reference>
<organism>
    <name type="scientific">Jannaschia sp. (strain CCS1)</name>
    <dbReference type="NCBI Taxonomy" id="290400"/>
    <lineage>
        <taxon>Bacteria</taxon>
        <taxon>Pseudomonadati</taxon>
        <taxon>Pseudomonadota</taxon>
        <taxon>Alphaproteobacteria</taxon>
        <taxon>Rhodobacterales</taxon>
        <taxon>Roseobacteraceae</taxon>
        <taxon>Jannaschia</taxon>
    </lineage>
</organism>
<comment type="function">
    <text evidence="1">Required for accurate and efficient protein synthesis under certain stress conditions. May act as a fidelity factor of the translation reaction, by catalyzing a one-codon backward translocation of tRNAs on improperly translocated ribosomes. Back-translocation proceeds from a post-translocation (POST) complex to a pre-translocation (PRE) complex, thus giving elongation factor G a second chance to translocate the tRNAs correctly. Binds to ribosomes in a GTP-dependent manner.</text>
</comment>
<comment type="catalytic activity">
    <reaction evidence="1">
        <text>GTP + H2O = GDP + phosphate + H(+)</text>
        <dbReference type="Rhea" id="RHEA:19669"/>
        <dbReference type="ChEBI" id="CHEBI:15377"/>
        <dbReference type="ChEBI" id="CHEBI:15378"/>
        <dbReference type="ChEBI" id="CHEBI:37565"/>
        <dbReference type="ChEBI" id="CHEBI:43474"/>
        <dbReference type="ChEBI" id="CHEBI:58189"/>
        <dbReference type="EC" id="3.6.5.n1"/>
    </reaction>
</comment>
<comment type="subcellular location">
    <subcellularLocation>
        <location evidence="1">Cell inner membrane</location>
        <topology evidence="1">Peripheral membrane protein</topology>
        <orientation evidence="1">Cytoplasmic side</orientation>
    </subcellularLocation>
</comment>
<comment type="similarity">
    <text evidence="1">Belongs to the TRAFAC class translation factor GTPase superfamily. Classic translation factor GTPase family. LepA subfamily.</text>
</comment>
<feature type="chain" id="PRO_0000265667" description="Elongation factor 4">
    <location>
        <begin position="1"/>
        <end position="599"/>
    </location>
</feature>
<feature type="domain" description="tr-type G">
    <location>
        <begin position="5"/>
        <end position="187"/>
    </location>
</feature>
<feature type="binding site" evidence="1">
    <location>
        <begin position="17"/>
        <end position="22"/>
    </location>
    <ligand>
        <name>GTP</name>
        <dbReference type="ChEBI" id="CHEBI:37565"/>
    </ligand>
</feature>
<feature type="binding site" evidence="1">
    <location>
        <begin position="134"/>
        <end position="137"/>
    </location>
    <ligand>
        <name>GTP</name>
        <dbReference type="ChEBI" id="CHEBI:37565"/>
    </ligand>
</feature>
<dbReference type="EC" id="3.6.5.n1" evidence="1"/>
<dbReference type="EMBL" id="CP000264">
    <property type="protein sequence ID" value="ABD56348.1"/>
    <property type="molecule type" value="Genomic_DNA"/>
</dbReference>
<dbReference type="RefSeq" id="WP_011456550.1">
    <property type="nucleotide sequence ID" value="NC_007802.1"/>
</dbReference>
<dbReference type="SMR" id="Q28LR4"/>
<dbReference type="STRING" id="290400.Jann_3431"/>
<dbReference type="KEGG" id="jan:Jann_3431"/>
<dbReference type="eggNOG" id="COG0481">
    <property type="taxonomic scope" value="Bacteria"/>
</dbReference>
<dbReference type="HOGENOM" id="CLU_009995_3_3_5"/>
<dbReference type="OrthoDB" id="9802948at2"/>
<dbReference type="Proteomes" id="UP000008326">
    <property type="component" value="Chromosome"/>
</dbReference>
<dbReference type="GO" id="GO:0005886">
    <property type="term" value="C:plasma membrane"/>
    <property type="evidence" value="ECO:0007669"/>
    <property type="project" value="UniProtKB-SubCell"/>
</dbReference>
<dbReference type="GO" id="GO:0005525">
    <property type="term" value="F:GTP binding"/>
    <property type="evidence" value="ECO:0007669"/>
    <property type="project" value="UniProtKB-UniRule"/>
</dbReference>
<dbReference type="GO" id="GO:0003924">
    <property type="term" value="F:GTPase activity"/>
    <property type="evidence" value="ECO:0007669"/>
    <property type="project" value="UniProtKB-UniRule"/>
</dbReference>
<dbReference type="GO" id="GO:0097216">
    <property type="term" value="F:guanosine tetraphosphate binding"/>
    <property type="evidence" value="ECO:0007669"/>
    <property type="project" value="UniProtKB-ARBA"/>
</dbReference>
<dbReference type="GO" id="GO:0043022">
    <property type="term" value="F:ribosome binding"/>
    <property type="evidence" value="ECO:0007669"/>
    <property type="project" value="UniProtKB-UniRule"/>
</dbReference>
<dbReference type="GO" id="GO:0003746">
    <property type="term" value="F:translation elongation factor activity"/>
    <property type="evidence" value="ECO:0007669"/>
    <property type="project" value="UniProtKB-UniRule"/>
</dbReference>
<dbReference type="GO" id="GO:0045727">
    <property type="term" value="P:positive regulation of translation"/>
    <property type="evidence" value="ECO:0007669"/>
    <property type="project" value="UniProtKB-UniRule"/>
</dbReference>
<dbReference type="CDD" id="cd03699">
    <property type="entry name" value="EF4_II"/>
    <property type="match status" value="1"/>
</dbReference>
<dbReference type="CDD" id="cd16260">
    <property type="entry name" value="EF4_III"/>
    <property type="match status" value="1"/>
</dbReference>
<dbReference type="CDD" id="cd01890">
    <property type="entry name" value="LepA"/>
    <property type="match status" value="1"/>
</dbReference>
<dbReference type="CDD" id="cd03709">
    <property type="entry name" value="lepA_C"/>
    <property type="match status" value="1"/>
</dbReference>
<dbReference type="FunFam" id="3.40.50.300:FF:000078">
    <property type="entry name" value="Elongation factor 4"/>
    <property type="match status" value="1"/>
</dbReference>
<dbReference type="FunFam" id="2.40.30.10:FF:000015">
    <property type="entry name" value="Translation factor GUF1, mitochondrial"/>
    <property type="match status" value="1"/>
</dbReference>
<dbReference type="FunFam" id="3.30.70.240:FF:000007">
    <property type="entry name" value="Translation factor GUF1, mitochondrial"/>
    <property type="match status" value="1"/>
</dbReference>
<dbReference type="FunFam" id="3.30.70.2570:FF:000001">
    <property type="entry name" value="Translation factor GUF1, mitochondrial"/>
    <property type="match status" value="1"/>
</dbReference>
<dbReference type="FunFam" id="3.30.70.870:FF:000004">
    <property type="entry name" value="Translation factor GUF1, mitochondrial"/>
    <property type="match status" value="1"/>
</dbReference>
<dbReference type="Gene3D" id="3.30.70.240">
    <property type="match status" value="1"/>
</dbReference>
<dbReference type="Gene3D" id="3.30.70.2570">
    <property type="entry name" value="Elongation factor 4, C-terminal domain"/>
    <property type="match status" value="1"/>
</dbReference>
<dbReference type="Gene3D" id="3.30.70.870">
    <property type="entry name" value="Elongation Factor G (Translational Gtpase), domain 3"/>
    <property type="match status" value="1"/>
</dbReference>
<dbReference type="Gene3D" id="3.40.50.300">
    <property type="entry name" value="P-loop containing nucleotide triphosphate hydrolases"/>
    <property type="match status" value="1"/>
</dbReference>
<dbReference type="Gene3D" id="2.40.30.10">
    <property type="entry name" value="Translation factors"/>
    <property type="match status" value="1"/>
</dbReference>
<dbReference type="HAMAP" id="MF_00071">
    <property type="entry name" value="LepA"/>
    <property type="match status" value="1"/>
</dbReference>
<dbReference type="InterPro" id="IPR006297">
    <property type="entry name" value="EF-4"/>
</dbReference>
<dbReference type="InterPro" id="IPR035647">
    <property type="entry name" value="EFG_III/V"/>
</dbReference>
<dbReference type="InterPro" id="IPR000640">
    <property type="entry name" value="EFG_V-like"/>
</dbReference>
<dbReference type="InterPro" id="IPR004161">
    <property type="entry name" value="EFTu-like_2"/>
</dbReference>
<dbReference type="InterPro" id="IPR031157">
    <property type="entry name" value="G_TR_CS"/>
</dbReference>
<dbReference type="InterPro" id="IPR038363">
    <property type="entry name" value="LepA_C_sf"/>
</dbReference>
<dbReference type="InterPro" id="IPR013842">
    <property type="entry name" value="LepA_CTD"/>
</dbReference>
<dbReference type="InterPro" id="IPR035654">
    <property type="entry name" value="LepA_IV"/>
</dbReference>
<dbReference type="InterPro" id="IPR027417">
    <property type="entry name" value="P-loop_NTPase"/>
</dbReference>
<dbReference type="InterPro" id="IPR005225">
    <property type="entry name" value="Small_GTP-bd"/>
</dbReference>
<dbReference type="InterPro" id="IPR000795">
    <property type="entry name" value="T_Tr_GTP-bd_dom"/>
</dbReference>
<dbReference type="NCBIfam" id="TIGR01393">
    <property type="entry name" value="lepA"/>
    <property type="match status" value="1"/>
</dbReference>
<dbReference type="NCBIfam" id="TIGR00231">
    <property type="entry name" value="small_GTP"/>
    <property type="match status" value="1"/>
</dbReference>
<dbReference type="PANTHER" id="PTHR43512:SF4">
    <property type="entry name" value="TRANSLATION FACTOR GUF1 HOMOLOG, CHLOROPLASTIC"/>
    <property type="match status" value="1"/>
</dbReference>
<dbReference type="PANTHER" id="PTHR43512">
    <property type="entry name" value="TRANSLATION FACTOR GUF1-RELATED"/>
    <property type="match status" value="1"/>
</dbReference>
<dbReference type="Pfam" id="PF00679">
    <property type="entry name" value="EFG_C"/>
    <property type="match status" value="1"/>
</dbReference>
<dbReference type="Pfam" id="PF00009">
    <property type="entry name" value="GTP_EFTU"/>
    <property type="match status" value="1"/>
</dbReference>
<dbReference type="Pfam" id="PF03144">
    <property type="entry name" value="GTP_EFTU_D2"/>
    <property type="match status" value="1"/>
</dbReference>
<dbReference type="Pfam" id="PF06421">
    <property type="entry name" value="LepA_C"/>
    <property type="match status" value="1"/>
</dbReference>
<dbReference type="PRINTS" id="PR00315">
    <property type="entry name" value="ELONGATNFCT"/>
</dbReference>
<dbReference type="SMART" id="SM00838">
    <property type="entry name" value="EFG_C"/>
    <property type="match status" value="1"/>
</dbReference>
<dbReference type="SUPFAM" id="SSF54980">
    <property type="entry name" value="EF-G C-terminal domain-like"/>
    <property type="match status" value="2"/>
</dbReference>
<dbReference type="SUPFAM" id="SSF52540">
    <property type="entry name" value="P-loop containing nucleoside triphosphate hydrolases"/>
    <property type="match status" value="1"/>
</dbReference>
<dbReference type="PROSITE" id="PS00301">
    <property type="entry name" value="G_TR_1"/>
    <property type="match status" value="1"/>
</dbReference>
<dbReference type="PROSITE" id="PS51722">
    <property type="entry name" value="G_TR_2"/>
    <property type="match status" value="1"/>
</dbReference>
<protein>
    <recommendedName>
        <fullName evidence="1">Elongation factor 4</fullName>
        <shortName evidence="1">EF-4</shortName>
        <ecNumber evidence="1">3.6.5.n1</ecNumber>
    </recommendedName>
    <alternativeName>
        <fullName evidence="1">Ribosomal back-translocase LepA</fullName>
    </alternativeName>
</protein>